<feature type="chain" id="PRO_0000436028" description="MADS-box protein AGL71">
    <location>
        <begin position="1"/>
        <end position="207"/>
    </location>
</feature>
<feature type="domain" description="MADS-box" evidence="1">
    <location>
        <begin position="1"/>
        <end position="61"/>
    </location>
</feature>
<feature type="domain" description="K-box" evidence="2">
    <location>
        <begin position="88"/>
        <end position="178"/>
    </location>
</feature>
<proteinExistence type="evidence at transcript level"/>
<protein>
    <recommendedName>
        <fullName>MADS-box protein AGL71</fullName>
    </recommendedName>
    <alternativeName>
        <fullName>Protein AGAMOUS-LIKE 71</fullName>
    </alternativeName>
</protein>
<accession>Q9LT93</accession>
<comment type="function">
    <text evidence="3">MADS-box transcription factor that acts with AGL42 and AGL72 in the control of flowering time. Promotes flowering at the shoot apical and axillary meristems. Seems to act through a gibberellin-dependent pathway. Interacts genetically with SOC1 and its expression is directly regulated by SOC1.</text>
</comment>
<comment type="subcellular location">
    <subcellularLocation>
        <location evidence="1">Nucleus</location>
    </subcellularLocation>
</comment>
<comment type="alternative products">
    <event type="alternative splicing"/>
    <isoform>
        <id>Q9LT93-1</id>
        <name>1</name>
        <sequence type="displayed"/>
    </isoform>
    <text evidence="4">A number of isoforms are produced. According to EST sequences.</text>
</comment>
<comment type="developmental stage">
    <text evidence="3">Expressed in the shoot apical meristem (SAM) during the vegetative phase and the floral transition. After floral transition, expressed in apical meristem (AM), inflorescence meristem (IM) and floral primordia.</text>
</comment>
<comment type="disruption phenotype">
    <text evidence="3">No visible phenotype under normal growth conditions.</text>
</comment>
<gene>
    <name type="primary">AGL71</name>
    <name evidence="5" type="ordered locus">At5g51870</name>
    <name evidence="6" type="ORF">MJM18.2</name>
</gene>
<dbReference type="EMBL" id="AY141220">
    <property type="protein sequence ID" value="AAN52784.1"/>
    <property type="molecule type" value="mRNA"/>
</dbReference>
<dbReference type="EMBL" id="AB025623">
    <property type="protein sequence ID" value="BAA97222.1"/>
    <property type="molecule type" value="Genomic_DNA"/>
</dbReference>
<dbReference type="EMBL" id="CP002688">
    <property type="protein sequence ID" value="AED96138.1"/>
    <property type="molecule type" value="Genomic_DNA"/>
</dbReference>
<dbReference type="RefSeq" id="NP_200000.3">
    <molecule id="Q9LT93-1"/>
    <property type="nucleotide sequence ID" value="NM_124566.3"/>
</dbReference>
<dbReference type="SMR" id="Q9LT93"/>
<dbReference type="FunCoup" id="Q9LT93">
    <property type="interactions" value="25"/>
</dbReference>
<dbReference type="IntAct" id="Q9LT93">
    <property type="interactions" value="3"/>
</dbReference>
<dbReference type="STRING" id="3702.Q9LT93"/>
<dbReference type="PaxDb" id="3702-AT5G51870.3"/>
<dbReference type="EnsemblPlants" id="AT5G51870.1">
    <molecule id="Q9LT93-1"/>
    <property type="protein sequence ID" value="AT5G51870.1"/>
    <property type="gene ID" value="AT5G51870"/>
</dbReference>
<dbReference type="GeneID" id="835262"/>
<dbReference type="Gramene" id="AT5G51870.1">
    <molecule id="Q9LT93-1"/>
    <property type="protein sequence ID" value="AT5G51870.1"/>
    <property type="gene ID" value="AT5G51870"/>
</dbReference>
<dbReference type="KEGG" id="ath:AT5G51870"/>
<dbReference type="Araport" id="AT5G51870"/>
<dbReference type="TAIR" id="AT5G51870">
    <property type="gene designation" value="AGL71"/>
</dbReference>
<dbReference type="eggNOG" id="KOG0014">
    <property type="taxonomic scope" value="Eukaryota"/>
</dbReference>
<dbReference type="InParanoid" id="Q9LT93"/>
<dbReference type="OMA" id="LEEVNMH"/>
<dbReference type="OrthoDB" id="1898716at2759"/>
<dbReference type="PhylomeDB" id="Q9LT93"/>
<dbReference type="PRO" id="PR:Q9LT93"/>
<dbReference type="Proteomes" id="UP000006548">
    <property type="component" value="Chromosome 5"/>
</dbReference>
<dbReference type="ExpressionAtlas" id="Q9LT93">
    <property type="expression patterns" value="baseline and differential"/>
</dbReference>
<dbReference type="GO" id="GO:0005634">
    <property type="term" value="C:nucleus"/>
    <property type="evidence" value="ECO:0007669"/>
    <property type="project" value="UniProtKB-SubCell"/>
</dbReference>
<dbReference type="GO" id="GO:0003700">
    <property type="term" value="F:DNA-binding transcription factor activity"/>
    <property type="evidence" value="ECO:0007669"/>
    <property type="project" value="InterPro"/>
</dbReference>
<dbReference type="GO" id="GO:0046983">
    <property type="term" value="F:protein dimerization activity"/>
    <property type="evidence" value="ECO:0007669"/>
    <property type="project" value="InterPro"/>
</dbReference>
<dbReference type="GO" id="GO:0000977">
    <property type="term" value="F:RNA polymerase II transcription regulatory region sequence-specific DNA binding"/>
    <property type="evidence" value="ECO:0007669"/>
    <property type="project" value="InterPro"/>
</dbReference>
<dbReference type="GO" id="GO:0030154">
    <property type="term" value="P:cell differentiation"/>
    <property type="evidence" value="ECO:0007669"/>
    <property type="project" value="UniProtKB-KW"/>
</dbReference>
<dbReference type="GO" id="GO:0009908">
    <property type="term" value="P:flower development"/>
    <property type="evidence" value="ECO:0007669"/>
    <property type="project" value="UniProtKB-KW"/>
</dbReference>
<dbReference type="GO" id="GO:0045944">
    <property type="term" value="P:positive regulation of transcription by RNA polymerase II"/>
    <property type="evidence" value="ECO:0007669"/>
    <property type="project" value="InterPro"/>
</dbReference>
<dbReference type="GO" id="GO:0009909">
    <property type="term" value="P:regulation of flower development"/>
    <property type="evidence" value="ECO:0000315"/>
    <property type="project" value="UniProtKB"/>
</dbReference>
<dbReference type="CDD" id="cd00265">
    <property type="entry name" value="MADS_MEF2_like"/>
    <property type="match status" value="1"/>
</dbReference>
<dbReference type="FunFam" id="3.40.1810.10:FF:000003">
    <property type="entry name" value="MADS-box transcription factor MADS-MC"/>
    <property type="match status" value="1"/>
</dbReference>
<dbReference type="Gene3D" id="3.40.1810.10">
    <property type="entry name" value="Transcription factor, MADS-box"/>
    <property type="match status" value="1"/>
</dbReference>
<dbReference type="InterPro" id="IPR050142">
    <property type="entry name" value="MADS-box/MEF2_TF"/>
</dbReference>
<dbReference type="InterPro" id="IPR033896">
    <property type="entry name" value="MEF2-like_N"/>
</dbReference>
<dbReference type="InterPro" id="IPR002487">
    <property type="entry name" value="TF_Kbox"/>
</dbReference>
<dbReference type="InterPro" id="IPR002100">
    <property type="entry name" value="TF_MADSbox"/>
</dbReference>
<dbReference type="InterPro" id="IPR036879">
    <property type="entry name" value="TF_MADSbox_sf"/>
</dbReference>
<dbReference type="PANTHER" id="PTHR48019">
    <property type="entry name" value="SERUM RESPONSE FACTOR HOMOLOG"/>
    <property type="match status" value="1"/>
</dbReference>
<dbReference type="Pfam" id="PF01486">
    <property type="entry name" value="K-box"/>
    <property type="match status" value="1"/>
</dbReference>
<dbReference type="Pfam" id="PF00319">
    <property type="entry name" value="SRF-TF"/>
    <property type="match status" value="1"/>
</dbReference>
<dbReference type="PRINTS" id="PR00404">
    <property type="entry name" value="MADSDOMAIN"/>
</dbReference>
<dbReference type="SMART" id="SM00432">
    <property type="entry name" value="MADS"/>
    <property type="match status" value="1"/>
</dbReference>
<dbReference type="SUPFAM" id="SSF55455">
    <property type="entry name" value="SRF-like"/>
    <property type="match status" value="1"/>
</dbReference>
<dbReference type="PROSITE" id="PS51297">
    <property type="entry name" value="K_BOX"/>
    <property type="match status" value="1"/>
</dbReference>
<dbReference type="PROSITE" id="PS50066">
    <property type="entry name" value="MADS_BOX_2"/>
    <property type="match status" value="1"/>
</dbReference>
<reference key="1">
    <citation type="journal article" date="2003" name="Plant Cell">
        <title>Molecular and phylogenetic analyses of the complete MADS-box transcription factor family in Arabidopsis: new openings to the MADS world.</title>
        <authorList>
            <person name="Parenicova L."/>
            <person name="de Folter S."/>
            <person name="Kieffer M."/>
            <person name="Horner D.S."/>
            <person name="Favalli C."/>
            <person name="Busscher J."/>
            <person name="Cook H.E."/>
            <person name="Ingram R.M."/>
            <person name="Kater M.M."/>
            <person name="Davies B."/>
            <person name="Angenent G.C."/>
            <person name="Colombo L."/>
        </authorList>
    </citation>
    <scope>NUCLEOTIDE SEQUENCE [MRNA]</scope>
    <source>
        <strain>cv. Columbia</strain>
        <tissue>Flower</tissue>
    </source>
</reference>
<reference key="2">
    <citation type="journal article" date="2000" name="DNA Res.">
        <title>Structural analysis of Arabidopsis thaliana chromosome 5. X. Sequence features of the regions of 3,076,755 bp covered by sixty P1 and TAC clones.</title>
        <authorList>
            <person name="Sato S."/>
            <person name="Nakamura Y."/>
            <person name="Kaneko T."/>
            <person name="Katoh T."/>
            <person name="Asamizu E."/>
            <person name="Kotani H."/>
            <person name="Tabata S."/>
        </authorList>
    </citation>
    <scope>NUCLEOTIDE SEQUENCE [LARGE SCALE GENOMIC DNA]</scope>
    <source>
        <strain>cv. Columbia</strain>
    </source>
</reference>
<reference key="3">
    <citation type="journal article" date="2017" name="Plant J.">
        <title>Araport11: a complete reannotation of the Arabidopsis thaliana reference genome.</title>
        <authorList>
            <person name="Cheng C.Y."/>
            <person name="Krishnakumar V."/>
            <person name="Chan A.P."/>
            <person name="Thibaud-Nissen F."/>
            <person name="Schobel S."/>
            <person name="Town C.D."/>
        </authorList>
    </citation>
    <scope>GENOME REANNOTATION</scope>
    <source>
        <strain>cv. Columbia</strain>
    </source>
</reference>
<reference key="4">
    <citation type="journal article" date="2011" name="Plant J.">
        <title>The Arabidopsis SOC1-like genes AGL42, AGL71 and AGL72 promote flowering in the shoot apical and axillary meristems.</title>
        <authorList>
            <person name="Dorca-Fornell C."/>
            <person name="Gregis V."/>
            <person name="Grandi V."/>
            <person name="Coupland G."/>
            <person name="Colombo L."/>
            <person name="Kater M.M."/>
        </authorList>
    </citation>
    <scope>FUNCTION</scope>
    <scope>DEVELOPMENTAL STAGE</scope>
    <scope>DISRUPTION PHENOTYPE</scope>
</reference>
<keyword id="KW-0025">Alternative splicing</keyword>
<keyword id="KW-0217">Developmental protein</keyword>
<keyword id="KW-0221">Differentiation</keyword>
<keyword id="KW-0238">DNA-binding</keyword>
<keyword id="KW-0287">Flowering</keyword>
<keyword id="KW-0539">Nucleus</keyword>
<keyword id="KW-1185">Reference proteome</keyword>
<keyword id="KW-0804">Transcription</keyword>
<keyword id="KW-0805">Transcription regulation</keyword>
<organism>
    <name type="scientific">Arabidopsis thaliana</name>
    <name type="common">Mouse-ear cress</name>
    <dbReference type="NCBI Taxonomy" id="3702"/>
    <lineage>
        <taxon>Eukaryota</taxon>
        <taxon>Viridiplantae</taxon>
        <taxon>Streptophyta</taxon>
        <taxon>Embryophyta</taxon>
        <taxon>Tracheophyta</taxon>
        <taxon>Spermatophyta</taxon>
        <taxon>Magnoliopsida</taxon>
        <taxon>eudicotyledons</taxon>
        <taxon>Gunneridae</taxon>
        <taxon>Pentapetalae</taxon>
        <taxon>rosids</taxon>
        <taxon>malvids</taxon>
        <taxon>Brassicales</taxon>
        <taxon>Brassicaceae</taxon>
        <taxon>Camelineae</taxon>
        <taxon>Arabidopsis</taxon>
    </lineage>
</organism>
<sequence length="207" mass="24079">MVRGKIEIKKIENVTSRQVTFSKRRSGLFKKAHELSVLCDAQVAAIVFSQSGRLHEYSSSQMEKIIDRYGKFSNAFYVAERPQVERYLQELKMEIDRMVKKIDLLEVHHRKLLGQGLDSCSVTELQEIDTQIEKSLRIVRSRKAELYADQLKKLKEKERELLNERKRLLEEVNMHHSSKGNTEGGHRTKHSSEVETDLFIGLPVTRL</sequence>
<name>AGL71_ARATH</name>
<evidence type="ECO:0000255" key="1">
    <source>
        <dbReference type="PROSITE-ProRule" id="PRU00251"/>
    </source>
</evidence>
<evidence type="ECO:0000255" key="2">
    <source>
        <dbReference type="PROSITE-ProRule" id="PRU00629"/>
    </source>
</evidence>
<evidence type="ECO:0000269" key="3">
    <source>
    </source>
</evidence>
<evidence type="ECO:0000305" key="4"/>
<evidence type="ECO:0000312" key="5">
    <source>
        <dbReference type="Araport" id="AT5G51870"/>
    </source>
</evidence>
<evidence type="ECO:0000312" key="6">
    <source>
        <dbReference type="EMBL" id="BAA97222.1"/>
    </source>
</evidence>